<keyword id="KW-0687">Ribonucleoprotein</keyword>
<keyword id="KW-0689">Ribosomal protein</keyword>
<name>RL32_STRPZ</name>
<gene>
    <name evidence="1" type="primary">rpmF</name>
    <name type="ordered locus">Spy49_1770</name>
</gene>
<protein>
    <recommendedName>
        <fullName evidence="1">Large ribosomal subunit protein bL32</fullName>
    </recommendedName>
    <alternativeName>
        <fullName evidence="3">50S ribosomal protein L32</fullName>
    </alternativeName>
</protein>
<accession>B5XJ84</accession>
<comment type="similarity">
    <text evidence="1">Belongs to the bacterial ribosomal protein bL32 family.</text>
</comment>
<evidence type="ECO:0000255" key="1">
    <source>
        <dbReference type="HAMAP-Rule" id="MF_00340"/>
    </source>
</evidence>
<evidence type="ECO:0000256" key="2">
    <source>
        <dbReference type="SAM" id="MobiDB-lite"/>
    </source>
</evidence>
<evidence type="ECO:0000305" key="3"/>
<sequence>MAVPARHTSKAKKNKRRTHYKLTAPSVQFDETTGDYSRSHRVSLKGYYKGRKIAKANEAK</sequence>
<organism>
    <name type="scientific">Streptococcus pyogenes serotype M49 (strain NZ131)</name>
    <dbReference type="NCBI Taxonomy" id="471876"/>
    <lineage>
        <taxon>Bacteria</taxon>
        <taxon>Bacillati</taxon>
        <taxon>Bacillota</taxon>
        <taxon>Bacilli</taxon>
        <taxon>Lactobacillales</taxon>
        <taxon>Streptococcaceae</taxon>
        <taxon>Streptococcus</taxon>
    </lineage>
</organism>
<dbReference type="EMBL" id="CP000829">
    <property type="protein sequence ID" value="ACI62018.1"/>
    <property type="molecule type" value="Genomic_DNA"/>
</dbReference>
<dbReference type="SMR" id="B5XJ84"/>
<dbReference type="KEGG" id="soz:Spy49_1770"/>
<dbReference type="HOGENOM" id="CLU_129084_2_3_9"/>
<dbReference type="Proteomes" id="UP000001039">
    <property type="component" value="Chromosome"/>
</dbReference>
<dbReference type="GO" id="GO:0015934">
    <property type="term" value="C:large ribosomal subunit"/>
    <property type="evidence" value="ECO:0007669"/>
    <property type="project" value="InterPro"/>
</dbReference>
<dbReference type="GO" id="GO:0003735">
    <property type="term" value="F:structural constituent of ribosome"/>
    <property type="evidence" value="ECO:0007669"/>
    <property type="project" value="InterPro"/>
</dbReference>
<dbReference type="GO" id="GO:0006412">
    <property type="term" value="P:translation"/>
    <property type="evidence" value="ECO:0007669"/>
    <property type="project" value="UniProtKB-UniRule"/>
</dbReference>
<dbReference type="HAMAP" id="MF_00340">
    <property type="entry name" value="Ribosomal_bL32"/>
    <property type="match status" value="1"/>
</dbReference>
<dbReference type="InterPro" id="IPR002677">
    <property type="entry name" value="Ribosomal_bL32"/>
</dbReference>
<dbReference type="InterPro" id="IPR044957">
    <property type="entry name" value="Ribosomal_bL32_bact"/>
</dbReference>
<dbReference type="InterPro" id="IPR011332">
    <property type="entry name" value="Ribosomal_zn-bd"/>
</dbReference>
<dbReference type="NCBIfam" id="TIGR01031">
    <property type="entry name" value="rpmF_bact"/>
    <property type="match status" value="1"/>
</dbReference>
<dbReference type="PANTHER" id="PTHR35534">
    <property type="entry name" value="50S RIBOSOMAL PROTEIN L32"/>
    <property type="match status" value="1"/>
</dbReference>
<dbReference type="PANTHER" id="PTHR35534:SF1">
    <property type="entry name" value="LARGE RIBOSOMAL SUBUNIT PROTEIN BL32"/>
    <property type="match status" value="1"/>
</dbReference>
<dbReference type="Pfam" id="PF01783">
    <property type="entry name" value="Ribosomal_L32p"/>
    <property type="match status" value="1"/>
</dbReference>
<dbReference type="SUPFAM" id="SSF57829">
    <property type="entry name" value="Zn-binding ribosomal proteins"/>
    <property type="match status" value="1"/>
</dbReference>
<reference key="1">
    <citation type="journal article" date="2008" name="J. Bacteriol.">
        <title>Genome sequence of a nephritogenic and highly transformable M49 strain of Streptococcus pyogenes.</title>
        <authorList>
            <person name="McShan W.M."/>
            <person name="Ferretti J.J."/>
            <person name="Karasawa T."/>
            <person name="Suvorov A.N."/>
            <person name="Lin S."/>
            <person name="Qin B."/>
            <person name="Jia H."/>
            <person name="Kenton S."/>
            <person name="Najar F."/>
            <person name="Wu H."/>
            <person name="Scott J."/>
            <person name="Roe B.A."/>
            <person name="Savic D.J."/>
        </authorList>
    </citation>
    <scope>NUCLEOTIDE SEQUENCE [LARGE SCALE GENOMIC DNA]</scope>
    <source>
        <strain>NZ131</strain>
    </source>
</reference>
<feature type="chain" id="PRO_1000120181" description="Large ribosomal subunit protein bL32">
    <location>
        <begin position="1"/>
        <end position="60"/>
    </location>
</feature>
<feature type="region of interest" description="Disordered" evidence="2">
    <location>
        <begin position="1"/>
        <end position="22"/>
    </location>
</feature>
<feature type="compositionally biased region" description="Basic residues" evidence="2">
    <location>
        <begin position="7"/>
        <end position="20"/>
    </location>
</feature>
<proteinExistence type="inferred from homology"/>